<protein>
    <recommendedName>
        <fullName evidence="1">Large ribosomal subunit protein uL10</fullName>
    </recommendedName>
    <alternativeName>
        <fullName evidence="2">50S ribosomal protein L10</fullName>
    </alternativeName>
</protein>
<proteinExistence type="inferred from homology"/>
<organism>
    <name type="scientific">Ectopseudomonas mendocina (strain ymp)</name>
    <name type="common">Pseudomonas mendocina</name>
    <dbReference type="NCBI Taxonomy" id="399739"/>
    <lineage>
        <taxon>Bacteria</taxon>
        <taxon>Pseudomonadati</taxon>
        <taxon>Pseudomonadota</taxon>
        <taxon>Gammaproteobacteria</taxon>
        <taxon>Pseudomonadales</taxon>
        <taxon>Pseudomonadaceae</taxon>
        <taxon>Ectopseudomonas</taxon>
    </lineage>
</organism>
<comment type="function">
    <text evidence="1">Forms part of the ribosomal stalk, playing a central role in the interaction of the ribosome with GTP-bound translation factors.</text>
</comment>
<comment type="subunit">
    <text evidence="1">Part of the ribosomal stalk of the 50S ribosomal subunit. The N-terminus interacts with L11 and the large rRNA to form the base of the stalk. The C-terminus forms an elongated spine to which L12 dimers bind in a sequential fashion forming a multimeric L10(L12)X complex.</text>
</comment>
<comment type="similarity">
    <text evidence="1">Belongs to the universal ribosomal protein uL10 family.</text>
</comment>
<evidence type="ECO:0000255" key="1">
    <source>
        <dbReference type="HAMAP-Rule" id="MF_00362"/>
    </source>
</evidence>
<evidence type="ECO:0000305" key="2"/>
<sequence length="166" mass="17585">MAIKLEDKKAIVAEVNEAAKAGLSAVVADARGVTVGAMTGLRKEAREAGVYVKVVRNTLLKRAVEGTQFDVLNDVFKGPTLIAFSNEHPGAAARLFKEFAKGQDKFEIKAAAFEGKYLAANQIDVLASLPTRDEGIAQLMSVIQGATSKLARTLAAIRDQKEAAAA</sequence>
<feature type="chain" id="PRO_1000005564" description="Large ribosomal subunit protein uL10">
    <location>
        <begin position="1"/>
        <end position="166"/>
    </location>
</feature>
<reference key="1">
    <citation type="submission" date="2007-04" db="EMBL/GenBank/DDBJ databases">
        <title>Complete sequence of Pseudomonas mendocina ymp.</title>
        <authorList>
            <consortium name="US DOE Joint Genome Institute"/>
            <person name="Copeland A."/>
            <person name="Lucas S."/>
            <person name="Lapidus A."/>
            <person name="Barry K."/>
            <person name="Glavina del Rio T."/>
            <person name="Dalin E."/>
            <person name="Tice H."/>
            <person name="Pitluck S."/>
            <person name="Kiss H."/>
            <person name="Brettin T."/>
            <person name="Detter J.C."/>
            <person name="Bruce D."/>
            <person name="Han C."/>
            <person name="Schmutz J."/>
            <person name="Larimer F."/>
            <person name="Land M."/>
            <person name="Hauser L."/>
            <person name="Kyrpides N."/>
            <person name="Mikhailova N."/>
            <person name="Hersman L."/>
            <person name="Dubois J."/>
            <person name="Maurice P."/>
            <person name="Richardson P."/>
        </authorList>
    </citation>
    <scope>NUCLEOTIDE SEQUENCE [LARGE SCALE GENOMIC DNA]</scope>
    <source>
        <strain>ymp</strain>
    </source>
</reference>
<dbReference type="EMBL" id="CP000680">
    <property type="protein sequence ID" value="ABP86665.1"/>
    <property type="molecule type" value="Genomic_DNA"/>
</dbReference>
<dbReference type="STRING" id="399739.Pmen_3918"/>
<dbReference type="KEGG" id="pmy:Pmen_3918"/>
<dbReference type="eggNOG" id="COG0244">
    <property type="taxonomic scope" value="Bacteria"/>
</dbReference>
<dbReference type="HOGENOM" id="CLU_092227_0_2_6"/>
<dbReference type="OrthoDB" id="9808307at2"/>
<dbReference type="GO" id="GO:0015934">
    <property type="term" value="C:large ribosomal subunit"/>
    <property type="evidence" value="ECO:0007669"/>
    <property type="project" value="InterPro"/>
</dbReference>
<dbReference type="GO" id="GO:0070180">
    <property type="term" value="F:large ribosomal subunit rRNA binding"/>
    <property type="evidence" value="ECO:0007669"/>
    <property type="project" value="UniProtKB-UniRule"/>
</dbReference>
<dbReference type="GO" id="GO:0003735">
    <property type="term" value="F:structural constituent of ribosome"/>
    <property type="evidence" value="ECO:0007669"/>
    <property type="project" value="InterPro"/>
</dbReference>
<dbReference type="GO" id="GO:0006412">
    <property type="term" value="P:translation"/>
    <property type="evidence" value="ECO:0007669"/>
    <property type="project" value="UniProtKB-UniRule"/>
</dbReference>
<dbReference type="CDD" id="cd05797">
    <property type="entry name" value="Ribosomal_L10"/>
    <property type="match status" value="1"/>
</dbReference>
<dbReference type="FunFam" id="3.30.70.1730:FF:000001">
    <property type="entry name" value="50S ribosomal protein L10"/>
    <property type="match status" value="1"/>
</dbReference>
<dbReference type="Gene3D" id="3.30.70.1730">
    <property type="match status" value="1"/>
</dbReference>
<dbReference type="Gene3D" id="6.10.250.2350">
    <property type="match status" value="1"/>
</dbReference>
<dbReference type="HAMAP" id="MF_00362">
    <property type="entry name" value="Ribosomal_uL10"/>
    <property type="match status" value="1"/>
</dbReference>
<dbReference type="InterPro" id="IPR001790">
    <property type="entry name" value="Ribosomal_uL10"/>
</dbReference>
<dbReference type="InterPro" id="IPR043141">
    <property type="entry name" value="Ribosomal_uL10-like_sf"/>
</dbReference>
<dbReference type="InterPro" id="IPR022973">
    <property type="entry name" value="Ribosomal_uL10_bac"/>
</dbReference>
<dbReference type="InterPro" id="IPR047865">
    <property type="entry name" value="Ribosomal_uL10_bac_type"/>
</dbReference>
<dbReference type="InterPro" id="IPR002363">
    <property type="entry name" value="Ribosomal_uL10_CS_bac"/>
</dbReference>
<dbReference type="NCBIfam" id="NF000955">
    <property type="entry name" value="PRK00099.1-1"/>
    <property type="match status" value="1"/>
</dbReference>
<dbReference type="PANTHER" id="PTHR11560">
    <property type="entry name" value="39S RIBOSOMAL PROTEIN L10, MITOCHONDRIAL"/>
    <property type="match status" value="1"/>
</dbReference>
<dbReference type="Pfam" id="PF00466">
    <property type="entry name" value="Ribosomal_L10"/>
    <property type="match status" value="1"/>
</dbReference>
<dbReference type="SUPFAM" id="SSF160369">
    <property type="entry name" value="Ribosomal protein L10-like"/>
    <property type="match status" value="1"/>
</dbReference>
<dbReference type="PROSITE" id="PS01109">
    <property type="entry name" value="RIBOSOMAL_L10"/>
    <property type="match status" value="1"/>
</dbReference>
<gene>
    <name evidence="1" type="primary">rplJ</name>
    <name type="ordered locus">Pmen_3918</name>
</gene>
<keyword id="KW-0687">Ribonucleoprotein</keyword>
<keyword id="KW-0689">Ribosomal protein</keyword>
<keyword id="KW-0694">RNA-binding</keyword>
<keyword id="KW-0699">rRNA-binding</keyword>
<name>RL10_ECTM1</name>
<accession>A4XZ99</accession>